<sequence length="448" mass="49716">MSHRYIPLTEKDKQEMLQTIGAKSIGELFGDVPSDILLNRDLNIAEGEAETTLLRRLNRIASKNITKETHTSFLGAGVYDHYAPSVVDAMISRSEFYTAYTPYQPEISQGELQAIFEFQTLICELTDMDVANSSMYDGMTSFAEACILAFSQTKKNKIVVSKGLHYQALQVLHTYAKTRKEFEVVEIDLDGTVTDLKKLEAAVDDETAAVAVQYPNFYGSIEDLEKIHSFIEDKKALFIVYANPLALGLLTPPGSFGADIVVGDTQPFGIPAQFGGPHCGYFATTKKLMRKVPGRLVGQTQDDEGNRGFVLTLQAREQHIRRDKATSNICSNQALNALASSIAMSALGKQGIYDIAVQNIEHANYAKQQFIKKGFEVLDGTSFNEFVVKFDKPIQQVNEELVKYNIIGGFDLGVVSDDFKNHMLIAVTELRTKDEIDTFVEKAGELND</sequence>
<reference key="1">
    <citation type="book" date="2006" name="Gram positive pathogens, 2nd edition">
        <title>The Staphylococcus aureus NCTC 8325 genome.</title>
        <editorList>
            <person name="Fischetti V."/>
            <person name="Novick R."/>
            <person name="Ferretti J."/>
            <person name="Portnoy D."/>
            <person name="Rood J."/>
        </editorList>
        <authorList>
            <person name="Gillaspy A.F."/>
            <person name="Worrell V."/>
            <person name="Orvis J."/>
            <person name="Roe B.A."/>
            <person name="Dyer D.W."/>
            <person name="Iandolo J.J."/>
        </authorList>
    </citation>
    <scope>NUCLEOTIDE SEQUENCE [LARGE SCALE GENOMIC DNA]</scope>
    <source>
        <strain>NCTC 8325 / PS 47</strain>
    </source>
</reference>
<organism>
    <name type="scientific">Staphylococcus aureus (strain NCTC 8325 / PS 47)</name>
    <dbReference type="NCBI Taxonomy" id="93061"/>
    <lineage>
        <taxon>Bacteria</taxon>
        <taxon>Bacillati</taxon>
        <taxon>Bacillota</taxon>
        <taxon>Bacilli</taxon>
        <taxon>Bacillales</taxon>
        <taxon>Staphylococcaceae</taxon>
        <taxon>Staphylococcus</taxon>
    </lineage>
</organism>
<name>GCSPA_STAA8</name>
<dbReference type="EC" id="1.4.4.2" evidence="1"/>
<dbReference type="EMBL" id="CP000253">
    <property type="protein sequence ID" value="ABD30710.1"/>
    <property type="molecule type" value="Genomic_DNA"/>
</dbReference>
<dbReference type="RefSeq" id="WP_000019687.1">
    <property type="nucleotide sequence ID" value="NZ_LS483365.1"/>
</dbReference>
<dbReference type="RefSeq" id="YP_500146.1">
    <property type="nucleotide sequence ID" value="NC_007795.1"/>
</dbReference>
<dbReference type="SMR" id="Q2FY34"/>
<dbReference type="STRING" id="93061.SAOUHSC_01633"/>
<dbReference type="PaxDb" id="1280-SAXN108_1559"/>
<dbReference type="GeneID" id="3919970"/>
<dbReference type="KEGG" id="sao:SAOUHSC_01633"/>
<dbReference type="PATRIC" id="fig|93061.5.peg.1486"/>
<dbReference type="eggNOG" id="COG0403">
    <property type="taxonomic scope" value="Bacteria"/>
</dbReference>
<dbReference type="HOGENOM" id="CLU_004620_0_2_9"/>
<dbReference type="OrthoDB" id="9771867at2"/>
<dbReference type="PRO" id="PR:Q2FY34"/>
<dbReference type="Proteomes" id="UP000008816">
    <property type="component" value="Chromosome"/>
</dbReference>
<dbReference type="GO" id="GO:0004375">
    <property type="term" value="F:glycine dehydrogenase (decarboxylating) activity"/>
    <property type="evidence" value="ECO:0007669"/>
    <property type="project" value="UniProtKB-EC"/>
</dbReference>
<dbReference type="GO" id="GO:0019464">
    <property type="term" value="P:glycine decarboxylation via glycine cleavage system"/>
    <property type="evidence" value="ECO:0007669"/>
    <property type="project" value="UniProtKB-UniRule"/>
</dbReference>
<dbReference type="GO" id="GO:0009116">
    <property type="term" value="P:nucleoside metabolic process"/>
    <property type="evidence" value="ECO:0007669"/>
    <property type="project" value="InterPro"/>
</dbReference>
<dbReference type="CDD" id="cd00613">
    <property type="entry name" value="GDC-P"/>
    <property type="match status" value="1"/>
</dbReference>
<dbReference type="Gene3D" id="3.90.1150.10">
    <property type="entry name" value="Aspartate Aminotransferase, domain 1"/>
    <property type="match status" value="1"/>
</dbReference>
<dbReference type="Gene3D" id="3.40.640.10">
    <property type="entry name" value="Type I PLP-dependent aspartate aminotransferase-like (Major domain)"/>
    <property type="match status" value="1"/>
</dbReference>
<dbReference type="HAMAP" id="MF_00712">
    <property type="entry name" value="GcvPA"/>
    <property type="match status" value="1"/>
</dbReference>
<dbReference type="InterPro" id="IPR023010">
    <property type="entry name" value="GcvPA"/>
</dbReference>
<dbReference type="InterPro" id="IPR049315">
    <property type="entry name" value="GDC-P_N"/>
</dbReference>
<dbReference type="InterPro" id="IPR020581">
    <property type="entry name" value="GDC_P"/>
</dbReference>
<dbReference type="InterPro" id="IPR015424">
    <property type="entry name" value="PyrdxlP-dep_Trfase"/>
</dbReference>
<dbReference type="InterPro" id="IPR015421">
    <property type="entry name" value="PyrdxlP-dep_Trfase_major"/>
</dbReference>
<dbReference type="InterPro" id="IPR015422">
    <property type="entry name" value="PyrdxlP-dep_Trfase_small"/>
</dbReference>
<dbReference type="NCBIfam" id="NF001696">
    <property type="entry name" value="PRK00451.1"/>
    <property type="match status" value="1"/>
</dbReference>
<dbReference type="PANTHER" id="PTHR42806">
    <property type="entry name" value="GLYCINE CLEAVAGE SYSTEM P-PROTEIN"/>
    <property type="match status" value="1"/>
</dbReference>
<dbReference type="PANTHER" id="PTHR42806:SF1">
    <property type="entry name" value="GLYCINE DEHYDROGENASE (DECARBOXYLATING)"/>
    <property type="match status" value="1"/>
</dbReference>
<dbReference type="Pfam" id="PF02347">
    <property type="entry name" value="GDC-P"/>
    <property type="match status" value="1"/>
</dbReference>
<dbReference type="PIRSF" id="PIRSF006815">
    <property type="entry name" value="GcvPA"/>
    <property type="match status" value="1"/>
</dbReference>
<dbReference type="SUPFAM" id="SSF53383">
    <property type="entry name" value="PLP-dependent transferases"/>
    <property type="match status" value="1"/>
</dbReference>
<keyword id="KW-0560">Oxidoreductase</keyword>
<keyword id="KW-1185">Reference proteome</keyword>
<evidence type="ECO:0000255" key="1">
    <source>
        <dbReference type="HAMAP-Rule" id="MF_00712"/>
    </source>
</evidence>
<comment type="function">
    <text evidence="1">The glycine cleavage system catalyzes the degradation of glycine. The P protein binds the alpha-amino group of glycine through its pyridoxal phosphate cofactor; CO(2) is released and the remaining methylamine moiety is then transferred to the lipoamide cofactor of the H protein.</text>
</comment>
<comment type="catalytic activity">
    <reaction evidence="1">
        <text>N(6)-[(R)-lipoyl]-L-lysyl-[glycine-cleavage complex H protein] + glycine + H(+) = N(6)-[(R)-S(8)-aminomethyldihydrolipoyl]-L-lysyl-[glycine-cleavage complex H protein] + CO2</text>
        <dbReference type="Rhea" id="RHEA:24304"/>
        <dbReference type="Rhea" id="RHEA-COMP:10494"/>
        <dbReference type="Rhea" id="RHEA-COMP:10495"/>
        <dbReference type="ChEBI" id="CHEBI:15378"/>
        <dbReference type="ChEBI" id="CHEBI:16526"/>
        <dbReference type="ChEBI" id="CHEBI:57305"/>
        <dbReference type="ChEBI" id="CHEBI:83099"/>
        <dbReference type="ChEBI" id="CHEBI:83143"/>
        <dbReference type="EC" id="1.4.4.2"/>
    </reaction>
</comment>
<comment type="subunit">
    <text evidence="1">The glycine cleavage system is composed of four proteins: P, T, L and H. In this organism, the P 'protein' is a heterodimer of two subunits.</text>
</comment>
<comment type="similarity">
    <text evidence="1">Belongs to the GcvP family. N-terminal subunit subfamily.</text>
</comment>
<gene>
    <name evidence="1" type="primary">gcvPA</name>
    <name type="ordered locus">SAOUHSC_01633</name>
</gene>
<accession>Q2FY34</accession>
<proteinExistence type="inferred from homology"/>
<feature type="chain" id="PRO_1000045681" description="Probable glycine dehydrogenase (decarboxylating) subunit 1">
    <location>
        <begin position="1"/>
        <end position="448"/>
    </location>
</feature>
<protein>
    <recommendedName>
        <fullName evidence="1">Probable glycine dehydrogenase (decarboxylating) subunit 1</fullName>
        <ecNumber evidence="1">1.4.4.2</ecNumber>
    </recommendedName>
    <alternativeName>
        <fullName evidence="1">Glycine cleavage system P-protein subunit 1</fullName>
    </alternativeName>
    <alternativeName>
        <fullName evidence="1">Glycine decarboxylase subunit 1</fullName>
    </alternativeName>
    <alternativeName>
        <fullName evidence="1">Glycine dehydrogenase (aminomethyl-transferring) subunit 1</fullName>
    </alternativeName>
</protein>